<organism>
    <name type="scientific">Shewanella halifaxensis (strain HAW-EB4)</name>
    <dbReference type="NCBI Taxonomy" id="458817"/>
    <lineage>
        <taxon>Bacteria</taxon>
        <taxon>Pseudomonadati</taxon>
        <taxon>Pseudomonadota</taxon>
        <taxon>Gammaproteobacteria</taxon>
        <taxon>Alteromonadales</taxon>
        <taxon>Shewanellaceae</taxon>
        <taxon>Shewanella</taxon>
    </lineage>
</organism>
<proteinExistence type="inferred from homology"/>
<keyword id="KW-0963">Cytoplasm</keyword>
<keyword id="KW-0378">Hydrolase</keyword>
<keyword id="KW-0694">RNA-binding</keyword>
<keyword id="KW-0820">tRNA-binding</keyword>
<accession>B0TR35</accession>
<reference key="1">
    <citation type="submission" date="2008-01" db="EMBL/GenBank/DDBJ databases">
        <title>Complete sequence of Shewanella halifaxensis HAW-EB4.</title>
        <authorList>
            <consortium name="US DOE Joint Genome Institute"/>
            <person name="Copeland A."/>
            <person name="Lucas S."/>
            <person name="Lapidus A."/>
            <person name="Glavina del Rio T."/>
            <person name="Dalin E."/>
            <person name="Tice H."/>
            <person name="Bruce D."/>
            <person name="Goodwin L."/>
            <person name="Pitluck S."/>
            <person name="Sims D."/>
            <person name="Brettin T."/>
            <person name="Detter J.C."/>
            <person name="Han C."/>
            <person name="Kuske C.R."/>
            <person name="Schmutz J."/>
            <person name="Larimer F."/>
            <person name="Land M."/>
            <person name="Hauser L."/>
            <person name="Kyrpides N."/>
            <person name="Kim E."/>
            <person name="Zhao J.-S."/>
            <person name="Richardson P."/>
        </authorList>
    </citation>
    <scope>NUCLEOTIDE SEQUENCE [LARGE SCALE GENOMIC DNA]</scope>
    <source>
        <strain>HAW-EB4</strain>
    </source>
</reference>
<gene>
    <name evidence="1" type="primary">pth</name>
    <name type="ordered locus">Shal_3219</name>
</gene>
<comment type="function">
    <text evidence="1">Hydrolyzes ribosome-free peptidyl-tRNAs (with 1 or more amino acids incorporated), which drop off the ribosome during protein synthesis, or as a result of ribosome stalling.</text>
</comment>
<comment type="function">
    <text evidence="1">Catalyzes the release of premature peptidyl moieties from peptidyl-tRNA molecules trapped in stalled 50S ribosomal subunits, and thus maintains levels of free tRNAs and 50S ribosomes.</text>
</comment>
<comment type="catalytic activity">
    <reaction evidence="1">
        <text>an N-acyl-L-alpha-aminoacyl-tRNA + H2O = an N-acyl-L-amino acid + a tRNA + H(+)</text>
        <dbReference type="Rhea" id="RHEA:54448"/>
        <dbReference type="Rhea" id="RHEA-COMP:10123"/>
        <dbReference type="Rhea" id="RHEA-COMP:13883"/>
        <dbReference type="ChEBI" id="CHEBI:15377"/>
        <dbReference type="ChEBI" id="CHEBI:15378"/>
        <dbReference type="ChEBI" id="CHEBI:59874"/>
        <dbReference type="ChEBI" id="CHEBI:78442"/>
        <dbReference type="ChEBI" id="CHEBI:138191"/>
        <dbReference type="EC" id="3.1.1.29"/>
    </reaction>
</comment>
<comment type="subunit">
    <text evidence="1">Monomer.</text>
</comment>
<comment type="subcellular location">
    <subcellularLocation>
        <location evidence="1">Cytoplasm</location>
    </subcellularLocation>
</comment>
<comment type="similarity">
    <text evidence="1">Belongs to the PTH family.</text>
</comment>
<name>PTH_SHEHH</name>
<protein>
    <recommendedName>
        <fullName evidence="1">Peptidyl-tRNA hydrolase</fullName>
        <shortName evidence="1">Pth</shortName>
        <ecNumber evidence="1">3.1.1.29</ecNumber>
    </recommendedName>
</protein>
<evidence type="ECO:0000255" key="1">
    <source>
        <dbReference type="HAMAP-Rule" id="MF_00083"/>
    </source>
</evidence>
<sequence>MSNIKLIVGLANPGAQYERTRHNAGAWYVEELARVCGATLTLDSKYFGMTARVTLHGKDVRLLIPTTFMNLSGKSVGALANFFRIAPEEILVAHDELDMPPGVAKFKLGGGHGGHNGLKDIIAKLANDKGFYRLRIGIGHPGDKSQVSNYVLSKASPTDQELMDAAVDEAVRSTEVLFNQDMAKAMHRLHSFKA</sequence>
<dbReference type="EC" id="3.1.1.29" evidence="1"/>
<dbReference type="EMBL" id="CP000931">
    <property type="protein sequence ID" value="ABZ77766.1"/>
    <property type="molecule type" value="Genomic_DNA"/>
</dbReference>
<dbReference type="RefSeq" id="WP_012278289.1">
    <property type="nucleotide sequence ID" value="NC_010334.1"/>
</dbReference>
<dbReference type="SMR" id="B0TR35"/>
<dbReference type="STRING" id="458817.Shal_3219"/>
<dbReference type="KEGG" id="shl:Shal_3219"/>
<dbReference type="eggNOG" id="COG0193">
    <property type="taxonomic scope" value="Bacteria"/>
</dbReference>
<dbReference type="HOGENOM" id="CLU_062456_3_1_6"/>
<dbReference type="OrthoDB" id="9800507at2"/>
<dbReference type="Proteomes" id="UP000001317">
    <property type="component" value="Chromosome"/>
</dbReference>
<dbReference type="GO" id="GO:0005737">
    <property type="term" value="C:cytoplasm"/>
    <property type="evidence" value="ECO:0007669"/>
    <property type="project" value="UniProtKB-SubCell"/>
</dbReference>
<dbReference type="GO" id="GO:0004045">
    <property type="term" value="F:peptidyl-tRNA hydrolase activity"/>
    <property type="evidence" value="ECO:0007669"/>
    <property type="project" value="UniProtKB-UniRule"/>
</dbReference>
<dbReference type="GO" id="GO:0000049">
    <property type="term" value="F:tRNA binding"/>
    <property type="evidence" value="ECO:0007669"/>
    <property type="project" value="UniProtKB-UniRule"/>
</dbReference>
<dbReference type="GO" id="GO:0006515">
    <property type="term" value="P:protein quality control for misfolded or incompletely synthesized proteins"/>
    <property type="evidence" value="ECO:0007669"/>
    <property type="project" value="UniProtKB-UniRule"/>
</dbReference>
<dbReference type="GO" id="GO:0072344">
    <property type="term" value="P:rescue of stalled ribosome"/>
    <property type="evidence" value="ECO:0007669"/>
    <property type="project" value="UniProtKB-UniRule"/>
</dbReference>
<dbReference type="CDD" id="cd00462">
    <property type="entry name" value="PTH"/>
    <property type="match status" value="1"/>
</dbReference>
<dbReference type="FunFam" id="3.40.50.1470:FF:000001">
    <property type="entry name" value="Peptidyl-tRNA hydrolase"/>
    <property type="match status" value="1"/>
</dbReference>
<dbReference type="Gene3D" id="3.40.50.1470">
    <property type="entry name" value="Peptidyl-tRNA hydrolase"/>
    <property type="match status" value="1"/>
</dbReference>
<dbReference type="HAMAP" id="MF_00083">
    <property type="entry name" value="Pept_tRNA_hydro_bact"/>
    <property type="match status" value="1"/>
</dbReference>
<dbReference type="InterPro" id="IPR001328">
    <property type="entry name" value="Pept_tRNA_hydro"/>
</dbReference>
<dbReference type="InterPro" id="IPR018171">
    <property type="entry name" value="Pept_tRNA_hydro_CS"/>
</dbReference>
<dbReference type="InterPro" id="IPR036416">
    <property type="entry name" value="Pept_tRNA_hydro_sf"/>
</dbReference>
<dbReference type="NCBIfam" id="TIGR00447">
    <property type="entry name" value="pth"/>
    <property type="match status" value="1"/>
</dbReference>
<dbReference type="PANTHER" id="PTHR17224">
    <property type="entry name" value="PEPTIDYL-TRNA HYDROLASE"/>
    <property type="match status" value="1"/>
</dbReference>
<dbReference type="PANTHER" id="PTHR17224:SF1">
    <property type="entry name" value="PEPTIDYL-TRNA HYDROLASE"/>
    <property type="match status" value="1"/>
</dbReference>
<dbReference type="Pfam" id="PF01195">
    <property type="entry name" value="Pept_tRNA_hydro"/>
    <property type="match status" value="1"/>
</dbReference>
<dbReference type="SUPFAM" id="SSF53178">
    <property type="entry name" value="Peptidyl-tRNA hydrolase-like"/>
    <property type="match status" value="1"/>
</dbReference>
<dbReference type="PROSITE" id="PS01195">
    <property type="entry name" value="PEPT_TRNA_HYDROL_1"/>
    <property type="match status" value="1"/>
</dbReference>
<dbReference type="PROSITE" id="PS01196">
    <property type="entry name" value="PEPT_TRNA_HYDROL_2"/>
    <property type="match status" value="1"/>
</dbReference>
<feature type="chain" id="PRO_1000075356" description="Peptidyl-tRNA hydrolase">
    <location>
        <begin position="1"/>
        <end position="194"/>
    </location>
</feature>
<feature type="active site" description="Proton acceptor" evidence="1">
    <location>
        <position position="22"/>
    </location>
</feature>
<feature type="binding site" evidence="1">
    <location>
        <position position="17"/>
    </location>
    <ligand>
        <name>tRNA</name>
        <dbReference type="ChEBI" id="CHEBI:17843"/>
    </ligand>
</feature>
<feature type="binding site" evidence="1">
    <location>
        <position position="68"/>
    </location>
    <ligand>
        <name>tRNA</name>
        <dbReference type="ChEBI" id="CHEBI:17843"/>
    </ligand>
</feature>
<feature type="binding site" evidence="1">
    <location>
        <position position="70"/>
    </location>
    <ligand>
        <name>tRNA</name>
        <dbReference type="ChEBI" id="CHEBI:17843"/>
    </ligand>
</feature>
<feature type="binding site" evidence="1">
    <location>
        <position position="116"/>
    </location>
    <ligand>
        <name>tRNA</name>
        <dbReference type="ChEBI" id="CHEBI:17843"/>
    </ligand>
</feature>
<feature type="site" description="Discriminates between blocked and unblocked aminoacyl-tRNA" evidence="1">
    <location>
        <position position="12"/>
    </location>
</feature>
<feature type="site" description="Stabilizes the basic form of H active site to accept a proton" evidence="1">
    <location>
        <position position="95"/>
    </location>
</feature>